<feature type="chain" id="PRO_0000132630" description="Small ribosomal subunit protein uS4c">
    <location>
        <begin position="1"/>
        <end position="202"/>
    </location>
</feature>
<feature type="domain" description="S4 RNA-binding">
    <location>
        <begin position="90"/>
        <end position="154"/>
    </location>
</feature>
<geneLocation type="chloroplast"/>
<comment type="function">
    <text evidence="1">One of the primary rRNA binding proteins, it binds directly to 16S rRNA where it nucleates assembly of the body of the 30S subunit.</text>
</comment>
<comment type="function">
    <text evidence="1">With S5 and S12 plays an important role in translational accuracy.</text>
</comment>
<comment type="subunit">
    <text evidence="1">Part of the 30S ribosomal subunit. Contacts protein S5. The interaction surface between S4 and S5 is involved in control of translational fidelity (By similarity).</text>
</comment>
<comment type="subcellular location">
    <subcellularLocation>
        <location>Plastid</location>
        <location>Chloroplast</location>
    </subcellularLocation>
</comment>
<comment type="similarity">
    <text evidence="2">Belongs to the universal ribosomal protein uS4 family.</text>
</comment>
<accession>Q9M4C1</accession>
<dbReference type="EMBL" id="AJ251063">
    <property type="protein sequence ID" value="CAB92137.1"/>
    <property type="molecule type" value="Genomic_DNA"/>
</dbReference>
<dbReference type="SMR" id="Q9M4C1"/>
<dbReference type="GO" id="GO:0009507">
    <property type="term" value="C:chloroplast"/>
    <property type="evidence" value="ECO:0007669"/>
    <property type="project" value="UniProtKB-SubCell"/>
</dbReference>
<dbReference type="GO" id="GO:0015935">
    <property type="term" value="C:small ribosomal subunit"/>
    <property type="evidence" value="ECO:0007669"/>
    <property type="project" value="InterPro"/>
</dbReference>
<dbReference type="GO" id="GO:0019843">
    <property type="term" value="F:rRNA binding"/>
    <property type="evidence" value="ECO:0007669"/>
    <property type="project" value="UniProtKB-UniRule"/>
</dbReference>
<dbReference type="GO" id="GO:0003735">
    <property type="term" value="F:structural constituent of ribosome"/>
    <property type="evidence" value="ECO:0007669"/>
    <property type="project" value="InterPro"/>
</dbReference>
<dbReference type="GO" id="GO:0042274">
    <property type="term" value="P:ribosomal small subunit biogenesis"/>
    <property type="evidence" value="ECO:0007669"/>
    <property type="project" value="TreeGrafter"/>
</dbReference>
<dbReference type="GO" id="GO:0006412">
    <property type="term" value="P:translation"/>
    <property type="evidence" value="ECO:0007669"/>
    <property type="project" value="UniProtKB-UniRule"/>
</dbReference>
<dbReference type="CDD" id="cd00165">
    <property type="entry name" value="S4"/>
    <property type="match status" value="1"/>
</dbReference>
<dbReference type="FunFam" id="1.10.1050.10:FF:000002">
    <property type="entry name" value="30S ribosomal protein S4, chloroplastic"/>
    <property type="match status" value="1"/>
</dbReference>
<dbReference type="FunFam" id="3.10.290.10:FF:000081">
    <property type="entry name" value="30S ribosomal protein S4, chloroplastic"/>
    <property type="match status" value="1"/>
</dbReference>
<dbReference type="Gene3D" id="1.10.1050.10">
    <property type="entry name" value="Ribosomal Protein S4 Delta 41, Chain A, domain 1"/>
    <property type="match status" value="1"/>
</dbReference>
<dbReference type="Gene3D" id="3.10.290.10">
    <property type="entry name" value="RNA-binding S4 domain"/>
    <property type="match status" value="1"/>
</dbReference>
<dbReference type="HAMAP" id="MF_01306_B">
    <property type="entry name" value="Ribosomal_uS4_B"/>
    <property type="match status" value="1"/>
</dbReference>
<dbReference type="InterPro" id="IPR022801">
    <property type="entry name" value="Ribosomal_uS4"/>
</dbReference>
<dbReference type="InterPro" id="IPR005709">
    <property type="entry name" value="Ribosomal_uS4_bac-type"/>
</dbReference>
<dbReference type="InterPro" id="IPR018079">
    <property type="entry name" value="Ribosomal_uS4_CS"/>
</dbReference>
<dbReference type="InterPro" id="IPR001912">
    <property type="entry name" value="Ribosomal_uS4_N"/>
</dbReference>
<dbReference type="InterPro" id="IPR002942">
    <property type="entry name" value="S4_RNA-bd"/>
</dbReference>
<dbReference type="InterPro" id="IPR036986">
    <property type="entry name" value="S4_RNA-bd_sf"/>
</dbReference>
<dbReference type="NCBIfam" id="NF003717">
    <property type="entry name" value="PRK05327.1"/>
    <property type="match status" value="1"/>
</dbReference>
<dbReference type="NCBIfam" id="TIGR01017">
    <property type="entry name" value="rpsD_bact"/>
    <property type="match status" value="1"/>
</dbReference>
<dbReference type="PANTHER" id="PTHR11831">
    <property type="entry name" value="30S 40S RIBOSOMAL PROTEIN"/>
    <property type="match status" value="1"/>
</dbReference>
<dbReference type="PANTHER" id="PTHR11831:SF4">
    <property type="entry name" value="SMALL RIBOSOMAL SUBUNIT PROTEIN US4M"/>
    <property type="match status" value="1"/>
</dbReference>
<dbReference type="Pfam" id="PF00163">
    <property type="entry name" value="Ribosomal_S4"/>
    <property type="match status" value="1"/>
</dbReference>
<dbReference type="Pfam" id="PF01479">
    <property type="entry name" value="S4"/>
    <property type="match status" value="1"/>
</dbReference>
<dbReference type="SMART" id="SM01390">
    <property type="entry name" value="Ribosomal_S4"/>
    <property type="match status" value="1"/>
</dbReference>
<dbReference type="SMART" id="SM00363">
    <property type="entry name" value="S4"/>
    <property type="match status" value="1"/>
</dbReference>
<dbReference type="SUPFAM" id="SSF55174">
    <property type="entry name" value="Alpha-L RNA-binding motif"/>
    <property type="match status" value="1"/>
</dbReference>
<dbReference type="PROSITE" id="PS00632">
    <property type="entry name" value="RIBOSOMAL_S4"/>
    <property type="match status" value="1"/>
</dbReference>
<dbReference type="PROSITE" id="PS50889">
    <property type="entry name" value="S4"/>
    <property type="match status" value="1"/>
</dbReference>
<gene>
    <name type="primary">rps4</name>
</gene>
<organism>
    <name type="scientific">Monoclea forsteri</name>
    <name type="common">Liverwort</name>
    <dbReference type="NCBI Taxonomy" id="93846"/>
    <lineage>
        <taxon>Eukaryota</taxon>
        <taxon>Viridiplantae</taxon>
        <taxon>Streptophyta</taxon>
        <taxon>Embryophyta</taxon>
        <taxon>Marchantiophyta</taxon>
        <taxon>Marchantiopsida</taxon>
        <taxon>Marchantiidae</taxon>
        <taxon>Marchantiales</taxon>
        <taxon>Monocleaceae</taxon>
        <taxon>Monoclea</taxon>
    </lineage>
</organism>
<proteinExistence type="inferred from homology"/>
<keyword id="KW-0150">Chloroplast</keyword>
<keyword id="KW-0934">Plastid</keyword>
<keyword id="KW-0687">Ribonucleoprotein</keyword>
<keyword id="KW-0689">Ribosomal protein</keyword>
<keyword id="KW-0694">RNA-binding</keyword>
<keyword id="KW-0699">rRNA-binding</keyword>
<reference key="1">
    <citation type="submission" date="1999-11" db="EMBL/GenBank/DDBJ databases">
        <title>A molecular approach to bryophyte systematics.</title>
        <authorList>
            <person name="Capesius I."/>
            <person name="Bloecher R."/>
        </authorList>
    </citation>
    <scope>NUCLEOTIDE SEQUENCE [GENOMIC DNA]</scope>
    <source>
        <tissue>Gametophyte</tissue>
    </source>
</reference>
<evidence type="ECO:0000250" key="1"/>
<evidence type="ECO:0000305" key="2"/>
<sequence>MSRYRGPRVKIIRRLGALPGLTTKTLKSKSGYINQSTSNKKVSQYRIRLEEKQKLRFHYGLTERQLLKYVRIARKAKGSTGQVLLQLLEMRLDNILFRLGMALTVPGARQLVNHRHILINNSMVDIPSYNCKPKDVITIKDRPKSQSIITKNLNSFQKSKVPNHLSFDLMQVKGLVNQMIDREWILLKINELLVVEYYSRQV</sequence>
<name>RR4_MONFO</name>
<protein>
    <recommendedName>
        <fullName evidence="2">Small ribosomal subunit protein uS4c</fullName>
    </recommendedName>
    <alternativeName>
        <fullName>30S ribosomal protein S4, chloroplastic</fullName>
    </alternativeName>
</protein>